<accession>A0RD64</accession>
<sequence length="179" mass="20985">MSKTLQSFNLLKWIDENKELLKPPVNNKVIWQDSEFIAMILGGPNRRRDFHVDPSDEFFYQIKGECYVECITEEGKREVVTVKEGDVFMLPAMVPHSPHRVANTYGLVIERKRSQGELEDFVWFCDECNHEMHRVRVQLSDIEKQVKEAIHSFNSNKEIRACKNCGHIMPEEVGEWKCE</sequence>
<name>3HAO_BACAH</name>
<evidence type="ECO:0000255" key="1">
    <source>
        <dbReference type="HAMAP-Rule" id="MF_00825"/>
    </source>
</evidence>
<proteinExistence type="inferred from homology"/>
<feature type="chain" id="PRO_0000309575" description="3-hydroxyanthranilate 3,4-dioxygenase">
    <location>
        <begin position="1"/>
        <end position="179"/>
    </location>
</feature>
<feature type="binding site" evidence="1">
    <location>
        <position position="47"/>
    </location>
    <ligand>
        <name>O2</name>
        <dbReference type="ChEBI" id="CHEBI:15379"/>
    </ligand>
</feature>
<feature type="binding site" evidence="1">
    <location>
        <position position="51"/>
    </location>
    <ligand>
        <name>Fe cation</name>
        <dbReference type="ChEBI" id="CHEBI:24875"/>
        <label>1</label>
        <note>catalytic</note>
    </ligand>
</feature>
<feature type="binding site" evidence="1">
    <location>
        <position position="57"/>
    </location>
    <ligand>
        <name>Fe cation</name>
        <dbReference type="ChEBI" id="CHEBI:24875"/>
        <label>1</label>
        <note>catalytic</note>
    </ligand>
</feature>
<feature type="binding site" evidence="1">
    <location>
        <position position="57"/>
    </location>
    <ligand>
        <name>substrate</name>
    </ligand>
</feature>
<feature type="binding site" evidence="1">
    <location>
        <position position="96"/>
    </location>
    <ligand>
        <name>Fe cation</name>
        <dbReference type="ChEBI" id="CHEBI:24875"/>
        <label>1</label>
        <note>catalytic</note>
    </ligand>
</feature>
<feature type="binding site" evidence="1">
    <location>
        <position position="100"/>
    </location>
    <ligand>
        <name>substrate</name>
    </ligand>
</feature>
<feature type="binding site" evidence="1">
    <location>
        <position position="110"/>
    </location>
    <ligand>
        <name>substrate</name>
    </ligand>
</feature>
<feature type="binding site" evidence="1">
    <location>
        <position position="125"/>
    </location>
    <ligand>
        <name>Fe cation</name>
        <dbReference type="ChEBI" id="CHEBI:24875"/>
        <label>2</label>
    </ligand>
</feature>
<feature type="binding site" evidence="1">
    <location>
        <position position="128"/>
    </location>
    <ligand>
        <name>Fe cation</name>
        <dbReference type="ChEBI" id="CHEBI:24875"/>
        <label>2</label>
    </ligand>
</feature>
<feature type="binding site" evidence="1">
    <location>
        <position position="162"/>
    </location>
    <ligand>
        <name>Fe cation</name>
        <dbReference type="ChEBI" id="CHEBI:24875"/>
        <label>2</label>
    </ligand>
</feature>
<feature type="binding site" evidence="1">
    <location>
        <position position="165"/>
    </location>
    <ligand>
        <name>Fe cation</name>
        <dbReference type="ChEBI" id="CHEBI:24875"/>
        <label>2</label>
    </ligand>
</feature>
<comment type="function">
    <text evidence="1">Catalyzes the oxidative ring opening of 3-hydroxyanthranilate to 2-amino-3-carboxymuconate semialdehyde, which spontaneously cyclizes to quinolinate.</text>
</comment>
<comment type="catalytic activity">
    <reaction evidence="1">
        <text>3-hydroxyanthranilate + O2 = (2Z,4Z)-2-amino-3-carboxymuconate 6-semialdehyde</text>
        <dbReference type="Rhea" id="RHEA:17953"/>
        <dbReference type="ChEBI" id="CHEBI:15379"/>
        <dbReference type="ChEBI" id="CHEBI:36559"/>
        <dbReference type="ChEBI" id="CHEBI:77612"/>
        <dbReference type="EC" id="1.13.11.6"/>
    </reaction>
</comment>
<comment type="cofactor">
    <cofactor evidence="1">
        <name>Fe(2+)</name>
        <dbReference type="ChEBI" id="CHEBI:29033"/>
    </cofactor>
    <text evidence="1">Binds 2 Fe(2+) ions per subunit.</text>
</comment>
<comment type="pathway">
    <text evidence="1">Cofactor biosynthesis; NAD(+) biosynthesis; quinolinate from L-kynurenine: step 3/3.</text>
</comment>
<comment type="similarity">
    <text evidence="1">Belongs to the 3-HAO family.</text>
</comment>
<keyword id="KW-0223">Dioxygenase</keyword>
<keyword id="KW-0408">Iron</keyword>
<keyword id="KW-0479">Metal-binding</keyword>
<keyword id="KW-0560">Oxidoreductase</keyword>
<keyword id="KW-0662">Pyridine nucleotide biosynthesis</keyword>
<reference key="1">
    <citation type="journal article" date="2007" name="J. Bacteriol.">
        <title>The complete genome sequence of Bacillus thuringiensis Al Hakam.</title>
        <authorList>
            <person name="Challacombe J.F."/>
            <person name="Altherr M.R."/>
            <person name="Xie G."/>
            <person name="Bhotika S.S."/>
            <person name="Brown N."/>
            <person name="Bruce D."/>
            <person name="Campbell C.S."/>
            <person name="Campbell M.L."/>
            <person name="Chen J."/>
            <person name="Chertkov O."/>
            <person name="Cleland C."/>
            <person name="Dimitrijevic M."/>
            <person name="Doggett N.A."/>
            <person name="Fawcett J.J."/>
            <person name="Glavina T."/>
            <person name="Goodwin L.A."/>
            <person name="Green L.D."/>
            <person name="Han C.S."/>
            <person name="Hill K.K."/>
            <person name="Hitchcock P."/>
            <person name="Jackson P.J."/>
            <person name="Keim P."/>
            <person name="Kewalramani A.R."/>
            <person name="Longmire J."/>
            <person name="Lucas S."/>
            <person name="Malfatti S."/>
            <person name="Martinez D."/>
            <person name="McMurry K."/>
            <person name="Meincke L.J."/>
            <person name="Misra M."/>
            <person name="Moseman B.L."/>
            <person name="Mundt M."/>
            <person name="Munk A.C."/>
            <person name="Okinaka R.T."/>
            <person name="Parson-Quintana B."/>
            <person name="Reilly L.P."/>
            <person name="Richardson P."/>
            <person name="Robinson D.L."/>
            <person name="Saunders E."/>
            <person name="Tapia R."/>
            <person name="Tesmer J.G."/>
            <person name="Thayer N."/>
            <person name="Thompson L.S."/>
            <person name="Tice H."/>
            <person name="Ticknor L.O."/>
            <person name="Wills P.L."/>
            <person name="Gilna P."/>
            <person name="Brettin T.S."/>
        </authorList>
    </citation>
    <scope>NUCLEOTIDE SEQUENCE [LARGE SCALE GENOMIC DNA]</scope>
    <source>
        <strain>Al Hakam</strain>
    </source>
</reference>
<gene>
    <name evidence="1" type="primary">nbaC</name>
    <name type="ordered locus">BALH_1838</name>
</gene>
<organism>
    <name type="scientific">Bacillus thuringiensis (strain Al Hakam)</name>
    <dbReference type="NCBI Taxonomy" id="412694"/>
    <lineage>
        <taxon>Bacteria</taxon>
        <taxon>Bacillati</taxon>
        <taxon>Bacillota</taxon>
        <taxon>Bacilli</taxon>
        <taxon>Bacillales</taxon>
        <taxon>Bacillaceae</taxon>
        <taxon>Bacillus</taxon>
        <taxon>Bacillus cereus group</taxon>
    </lineage>
</organism>
<protein>
    <recommendedName>
        <fullName evidence="1">3-hydroxyanthranilate 3,4-dioxygenase</fullName>
        <ecNumber evidence="1">1.13.11.6</ecNumber>
    </recommendedName>
    <alternativeName>
        <fullName evidence="1">3-hydroxyanthranilate oxygenase</fullName>
        <shortName evidence="1">3-HAO</shortName>
    </alternativeName>
    <alternativeName>
        <fullName evidence="1">3-hydroxyanthranilic acid dioxygenase</fullName>
        <shortName evidence="1">HAD</shortName>
    </alternativeName>
</protein>
<dbReference type="EC" id="1.13.11.6" evidence="1"/>
<dbReference type="EMBL" id="CP000485">
    <property type="protein sequence ID" value="ABK85157.1"/>
    <property type="molecule type" value="Genomic_DNA"/>
</dbReference>
<dbReference type="RefSeq" id="WP_000047734.1">
    <property type="nucleotide sequence ID" value="NC_008600.1"/>
</dbReference>
<dbReference type="SMR" id="A0RD64"/>
<dbReference type="KEGG" id="btl:BALH_1838"/>
<dbReference type="HOGENOM" id="CLU_095765_0_0_9"/>
<dbReference type="UniPathway" id="UPA00253">
    <property type="reaction ID" value="UER00330"/>
</dbReference>
<dbReference type="GO" id="GO:0005737">
    <property type="term" value="C:cytoplasm"/>
    <property type="evidence" value="ECO:0007669"/>
    <property type="project" value="TreeGrafter"/>
</dbReference>
<dbReference type="GO" id="GO:0000334">
    <property type="term" value="F:3-hydroxyanthranilate 3,4-dioxygenase activity"/>
    <property type="evidence" value="ECO:0007669"/>
    <property type="project" value="UniProtKB-UniRule"/>
</dbReference>
<dbReference type="GO" id="GO:0008198">
    <property type="term" value="F:ferrous iron binding"/>
    <property type="evidence" value="ECO:0007669"/>
    <property type="project" value="UniProtKB-UniRule"/>
</dbReference>
<dbReference type="GO" id="GO:0043420">
    <property type="term" value="P:anthranilate metabolic process"/>
    <property type="evidence" value="ECO:0007669"/>
    <property type="project" value="UniProtKB-UniRule"/>
</dbReference>
<dbReference type="GO" id="GO:0006569">
    <property type="term" value="P:L-tryptophan catabolic process"/>
    <property type="evidence" value="ECO:0007669"/>
    <property type="project" value="UniProtKB-UniRule"/>
</dbReference>
<dbReference type="GO" id="GO:0009435">
    <property type="term" value="P:NAD biosynthetic process"/>
    <property type="evidence" value="ECO:0007669"/>
    <property type="project" value="UniProtKB-UniPathway"/>
</dbReference>
<dbReference type="GO" id="GO:0019805">
    <property type="term" value="P:quinolinate biosynthetic process"/>
    <property type="evidence" value="ECO:0007669"/>
    <property type="project" value="UniProtKB-UniRule"/>
</dbReference>
<dbReference type="CDD" id="cd06123">
    <property type="entry name" value="cupin_HAO"/>
    <property type="match status" value="1"/>
</dbReference>
<dbReference type="Gene3D" id="2.60.120.10">
    <property type="entry name" value="Jelly Rolls"/>
    <property type="match status" value="1"/>
</dbReference>
<dbReference type="HAMAP" id="MF_00825">
    <property type="entry name" value="3_HAO"/>
    <property type="match status" value="1"/>
</dbReference>
<dbReference type="InterPro" id="IPR010329">
    <property type="entry name" value="3hydroanth_dOase"/>
</dbReference>
<dbReference type="InterPro" id="IPR014710">
    <property type="entry name" value="RmlC-like_jellyroll"/>
</dbReference>
<dbReference type="InterPro" id="IPR011051">
    <property type="entry name" value="RmlC_Cupin_sf"/>
</dbReference>
<dbReference type="NCBIfam" id="TIGR03037">
    <property type="entry name" value="anthran_nbaC"/>
    <property type="match status" value="1"/>
</dbReference>
<dbReference type="NCBIfam" id="NF009763">
    <property type="entry name" value="PRK13264.1"/>
    <property type="match status" value="1"/>
</dbReference>
<dbReference type="PANTHER" id="PTHR15497">
    <property type="entry name" value="3-HYDROXYANTHRANILATE 3,4-DIOXYGENASE"/>
    <property type="match status" value="1"/>
</dbReference>
<dbReference type="PANTHER" id="PTHR15497:SF1">
    <property type="entry name" value="3-HYDROXYANTHRANILATE 3,4-DIOXYGENASE"/>
    <property type="match status" value="1"/>
</dbReference>
<dbReference type="Pfam" id="PF06052">
    <property type="entry name" value="3-HAO"/>
    <property type="match status" value="1"/>
</dbReference>
<dbReference type="SUPFAM" id="SSF51182">
    <property type="entry name" value="RmlC-like cupins"/>
    <property type="match status" value="1"/>
</dbReference>